<reference key="1">
    <citation type="submission" date="2006-12" db="EMBL/GenBank/DDBJ databases">
        <title>Complete sequence of chromosome of Mycobacterium sp. KMS.</title>
        <authorList>
            <consortium name="US DOE Joint Genome Institute"/>
            <person name="Copeland A."/>
            <person name="Lucas S."/>
            <person name="Lapidus A."/>
            <person name="Barry K."/>
            <person name="Detter J.C."/>
            <person name="Glavina del Rio T."/>
            <person name="Hammon N."/>
            <person name="Israni S."/>
            <person name="Dalin E."/>
            <person name="Tice H."/>
            <person name="Pitluck S."/>
            <person name="Kiss H."/>
            <person name="Brettin T."/>
            <person name="Bruce D."/>
            <person name="Han C."/>
            <person name="Tapia R."/>
            <person name="Gilna P."/>
            <person name="Schmutz J."/>
            <person name="Larimer F."/>
            <person name="Land M."/>
            <person name="Hauser L."/>
            <person name="Kyrpides N."/>
            <person name="Mikhailova N."/>
            <person name="Miller C.D."/>
            <person name="Richardson P."/>
        </authorList>
    </citation>
    <scope>NUCLEOTIDE SEQUENCE [LARGE SCALE GENOMIC DNA]</scope>
    <source>
        <strain>KMS</strain>
    </source>
</reference>
<keyword id="KW-0066">ATP synthesis</keyword>
<keyword id="KW-1003">Cell membrane</keyword>
<keyword id="KW-0139">CF(1)</keyword>
<keyword id="KW-0375">Hydrogen ion transport</keyword>
<keyword id="KW-0406">Ion transport</keyword>
<keyword id="KW-0472">Membrane</keyword>
<keyword id="KW-0813">Transport</keyword>
<accession>A1UJY5</accession>
<protein>
    <recommendedName>
        <fullName evidence="1">ATP synthase gamma chain</fullName>
    </recommendedName>
    <alternativeName>
        <fullName evidence="1">ATP synthase F1 sector gamma subunit</fullName>
    </alternativeName>
    <alternativeName>
        <fullName evidence="1">F-ATPase gamma subunit</fullName>
    </alternativeName>
</protein>
<dbReference type="EMBL" id="CP000518">
    <property type="protein sequence ID" value="ABL93143.1"/>
    <property type="molecule type" value="Genomic_DNA"/>
</dbReference>
<dbReference type="SMR" id="A1UJY5"/>
<dbReference type="STRING" id="189918.Mkms_3951"/>
<dbReference type="KEGG" id="mkm:Mkms_3951"/>
<dbReference type="HOGENOM" id="CLU_050669_0_0_11"/>
<dbReference type="OrthoDB" id="9812769at2"/>
<dbReference type="GO" id="GO:0005886">
    <property type="term" value="C:plasma membrane"/>
    <property type="evidence" value="ECO:0007669"/>
    <property type="project" value="UniProtKB-SubCell"/>
</dbReference>
<dbReference type="GO" id="GO:0045259">
    <property type="term" value="C:proton-transporting ATP synthase complex"/>
    <property type="evidence" value="ECO:0007669"/>
    <property type="project" value="UniProtKB-KW"/>
</dbReference>
<dbReference type="GO" id="GO:0005524">
    <property type="term" value="F:ATP binding"/>
    <property type="evidence" value="ECO:0007669"/>
    <property type="project" value="UniProtKB-UniRule"/>
</dbReference>
<dbReference type="GO" id="GO:0046933">
    <property type="term" value="F:proton-transporting ATP synthase activity, rotational mechanism"/>
    <property type="evidence" value="ECO:0007669"/>
    <property type="project" value="UniProtKB-UniRule"/>
</dbReference>
<dbReference type="GO" id="GO:0042777">
    <property type="term" value="P:proton motive force-driven plasma membrane ATP synthesis"/>
    <property type="evidence" value="ECO:0007669"/>
    <property type="project" value="UniProtKB-UniRule"/>
</dbReference>
<dbReference type="CDD" id="cd12151">
    <property type="entry name" value="F1-ATPase_gamma"/>
    <property type="match status" value="1"/>
</dbReference>
<dbReference type="Gene3D" id="3.40.1380.10">
    <property type="match status" value="1"/>
</dbReference>
<dbReference type="Gene3D" id="1.10.287.80">
    <property type="entry name" value="ATP synthase, gamma subunit, helix hairpin domain"/>
    <property type="match status" value="1"/>
</dbReference>
<dbReference type="HAMAP" id="MF_00815">
    <property type="entry name" value="ATP_synth_gamma_bact"/>
    <property type="match status" value="1"/>
</dbReference>
<dbReference type="InterPro" id="IPR035968">
    <property type="entry name" value="ATP_synth_F1_ATPase_gsu"/>
</dbReference>
<dbReference type="InterPro" id="IPR000131">
    <property type="entry name" value="ATP_synth_F1_gsu"/>
</dbReference>
<dbReference type="InterPro" id="IPR023632">
    <property type="entry name" value="ATP_synth_F1_gsu_CS"/>
</dbReference>
<dbReference type="NCBIfam" id="TIGR01146">
    <property type="entry name" value="ATPsyn_F1gamma"/>
    <property type="match status" value="1"/>
</dbReference>
<dbReference type="NCBIfam" id="NF004145">
    <property type="entry name" value="PRK05621.1-2"/>
    <property type="match status" value="1"/>
</dbReference>
<dbReference type="PANTHER" id="PTHR11693">
    <property type="entry name" value="ATP SYNTHASE GAMMA CHAIN"/>
    <property type="match status" value="1"/>
</dbReference>
<dbReference type="PANTHER" id="PTHR11693:SF22">
    <property type="entry name" value="ATP SYNTHASE SUBUNIT GAMMA, MITOCHONDRIAL"/>
    <property type="match status" value="1"/>
</dbReference>
<dbReference type="Pfam" id="PF00231">
    <property type="entry name" value="ATP-synt"/>
    <property type="match status" value="1"/>
</dbReference>
<dbReference type="PRINTS" id="PR00126">
    <property type="entry name" value="ATPASEGAMMA"/>
</dbReference>
<dbReference type="SUPFAM" id="SSF52943">
    <property type="entry name" value="ATP synthase (F1-ATPase), gamma subunit"/>
    <property type="match status" value="1"/>
</dbReference>
<dbReference type="PROSITE" id="PS00153">
    <property type="entry name" value="ATPASE_GAMMA"/>
    <property type="match status" value="1"/>
</dbReference>
<proteinExistence type="inferred from homology"/>
<evidence type="ECO:0000255" key="1">
    <source>
        <dbReference type="HAMAP-Rule" id="MF_00815"/>
    </source>
</evidence>
<sequence>MAATLRELRGRIRSAGSIKKITKAQEMIATSRIAKAQARVEAARPYDREITNMLTELATASALDHPLLVQRENPRRAGVLVVSSDRGLAGAYNANVFRRSEELFSLLREEGKEPVLYVVGRKALSYYSFRNWDVTESWSGFSERPEYEHAQEIGETLVKAFMAGVDDEGDDAGADGILGLDELHIVFTEFRSMLSQSAIARRIAPMVVEYSEEDTNEPHTLFSFEPSAETLFDALLPRYVSTRIFAAMLEAAASESASRRRAMKSASDNADDLIKDLTLMANRERQSQITQEISEIVGGANALADAAKK</sequence>
<gene>
    <name evidence="1" type="primary">atpG</name>
    <name type="ordered locus">Mkms_3951</name>
</gene>
<name>ATPG_MYCSK</name>
<feature type="chain" id="PRO_1000053259" description="ATP synthase gamma chain">
    <location>
        <begin position="1"/>
        <end position="309"/>
    </location>
</feature>
<comment type="function">
    <text evidence="1">Produces ATP from ADP in the presence of a proton gradient across the membrane. The gamma chain is believed to be important in regulating ATPase activity and the flow of protons through the CF(0) complex.</text>
</comment>
<comment type="subunit">
    <text evidence="1">F-type ATPases have 2 components, CF(1) - the catalytic core - and CF(0) - the membrane proton channel. CF(1) has five subunits: alpha(3), beta(3), gamma(1), delta(1), epsilon(1). CF(0) has three main subunits: a, b and c.</text>
</comment>
<comment type="subcellular location">
    <subcellularLocation>
        <location evidence="1">Cell membrane</location>
        <topology evidence="1">Peripheral membrane protein</topology>
    </subcellularLocation>
</comment>
<comment type="similarity">
    <text evidence="1">Belongs to the ATPase gamma chain family.</text>
</comment>
<organism>
    <name type="scientific">Mycobacterium sp. (strain KMS)</name>
    <dbReference type="NCBI Taxonomy" id="189918"/>
    <lineage>
        <taxon>Bacteria</taxon>
        <taxon>Bacillati</taxon>
        <taxon>Actinomycetota</taxon>
        <taxon>Actinomycetes</taxon>
        <taxon>Mycobacteriales</taxon>
        <taxon>Mycobacteriaceae</taxon>
        <taxon>Mycobacterium</taxon>
    </lineage>
</organism>